<protein>
    <recommendedName>
        <fullName>Carboxypeptidase S</fullName>
        <ecNumber>3.4.17.4</ecNumber>
    </recommendedName>
    <alternativeName>
        <fullName>GLY-X carboxypeptidase</fullName>
    </alternativeName>
    <alternativeName>
        <fullName>YSCS</fullName>
    </alternativeName>
</protein>
<feature type="chain" id="PRO_0000185271" description="Carboxypeptidase S">
    <location>
        <begin position="1"/>
        <end position="576"/>
    </location>
</feature>
<feature type="topological domain" description="Cytoplasmic" evidence="2">
    <location>
        <begin position="1"/>
        <end position="19"/>
    </location>
</feature>
<feature type="transmembrane region" description="Helical" evidence="2">
    <location>
        <begin position="20"/>
        <end position="40"/>
    </location>
</feature>
<feature type="topological domain" description="Lumenal" evidence="2">
    <location>
        <begin position="41"/>
        <end position="576"/>
    </location>
</feature>
<feature type="region of interest" description="Disordered" evidence="3">
    <location>
        <begin position="44"/>
        <end position="65"/>
    </location>
</feature>
<feature type="active site" evidence="1">
    <location>
        <position position="170"/>
    </location>
</feature>
<feature type="active site" description="Proton acceptor" evidence="1">
    <location>
        <position position="239"/>
    </location>
</feature>
<feature type="binding site" evidence="1">
    <location>
        <position position="168"/>
    </location>
    <ligand>
        <name>Zn(2+)</name>
        <dbReference type="ChEBI" id="CHEBI:29105"/>
        <label>2</label>
    </ligand>
</feature>
<feature type="binding site" evidence="1">
    <location>
        <position position="205"/>
    </location>
    <ligand>
        <name>Zn(2+)</name>
        <dbReference type="ChEBI" id="CHEBI:29105"/>
        <label>1</label>
    </ligand>
</feature>
<feature type="binding site" evidence="1">
    <location>
        <position position="205"/>
    </location>
    <ligand>
        <name>Zn(2+)</name>
        <dbReference type="ChEBI" id="CHEBI:29105"/>
        <label>2</label>
    </ligand>
</feature>
<feature type="binding site" evidence="1">
    <location>
        <position position="240"/>
    </location>
    <ligand>
        <name>Zn(2+)</name>
        <dbReference type="ChEBI" id="CHEBI:29105"/>
        <label>1</label>
    </ligand>
</feature>
<feature type="binding site" evidence="1">
    <location>
        <position position="268"/>
    </location>
    <ligand>
        <name>Zn(2+)</name>
        <dbReference type="ChEBI" id="CHEBI:29105"/>
        <label>2</label>
    </ligand>
</feature>
<feature type="binding site" evidence="1">
    <location>
        <position position="547"/>
    </location>
    <ligand>
        <name>Zn(2+)</name>
        <dbReference type="ChEBI" id="CHEBI:29105"/>
        <label>1</label>
    </ligand>
</feature>
<feature type="glycosylation site" description="N-linked (GlcNAc...) asparagine" evidence="2">
    <location>
        <position position="88"/>
    </location>
</feature>
<feature type="glycosylation site" description="N-linked (GlcNAc...) asparagine" evidence="2">
    <location>
        <position position="176"/>
    </location>
</feature>
<feature type="glycosylation site" description="N-linked (GlcNAc...) asparagine" evidence="2">
    <location>
        <position position="228"/>
    </location>
</feature>
<feature type="glycosylation site" description="N-linked (GlcNAc...) asparagine" evidence="2">
    <location>
        <position position="381"/>
    </location>
</feature>
<feature type="glycosylation site" description="N-linked (GlcNAc...) asparagine" evidence="2">
    <location>
        <position position="525"/>
    </location>
</feature>
<feature type="cross-link" description="Glycyl lysine isopeptide (Lys-Gly) (interchain with G-Cter in ubiquitin)" evidence="9">
    <location>
        <position position="8"/>
    </location>
</feature>
<feature type="sequence conflict" description="In Ref. 2; CAA40571." evidence="8" ref="2">
    <original>S</original>
    <variation>T</variation>
    <location>
        <position position="387"/>
    </location>
</feature>
<proteinExistence type="evidence at protein level"/>
<sequence length="576" mass="64597">MIALPVEKAPRKSLWQRHRAFISGIVALIIIGTFFLTSGLHPAPPHEAKRPHHGKGPMHSPKCEKIEPLSPSFKHSVDTILHDPAFRNSSIEKLSNAVRIPTVVQDKNPNPADDPDFYKHFYELHDYFEKTFPNIHKHLKLEKVNELGLLYTWEGSDPDLKPLLLMAHQDVVPVNNETLSSWKFPPFSGHYDPETDFVWGRGSNDCKNLLIAEFEAIEQLLIDGFKPNRTIVMSLGFDEEASGTLGAASLASFLHERYGDDGIYSIIDEGEGIMEVDKDVFVATPINAEKGYVDFEVSILGHGGHSSVPPDHTTIGIASELITEFEANPFDYEFEFDNPIYGLLTCAAEHSKSLSKDVKKTILGAPFCPRRKDKLVEYISNQSHLRSLIRTTQAVDIINGGVKANALPETTRFLINHRINLHSSVAEVFERNIEYAKKIAEKYGYGLSKNGDDYIIPETELGHIDITLLRELEPAPLSPSSGPVWDILAGTIQDVFENGVLQNNEEFYVTTGLFSGNTDTKYYWNLSKNIYRFVGSIIDIDLLKTLHSVNEHVDVPGHLSAIAFVYEYIVNVNEYA</sequence>
<comment type="function">
    <text>Necessary for use of certain peptides as sole nitrogen source. May also cleave intracellularly generated peptides to recycle amino acids for protein synthesis.</text>
</comment>
<comment type="catalytic activity">
    <reaction>
        <text>Release of a C-terminal amino acid from a peptide in which glycine is the penultimate amino acid, e.g. Z-Gly-|-Leu.</text>
        <dbReference type="EC" id="3.4.17.4"/>
    </reaction>
</comment>
<comment type="cofactor">
    <cofactor evidence="1">
        <name>Zn(2+)</name>
        <dbReference type="ChEBI" id="CHEBI:29105"/>
    </cofactor>
    <text evidence="1">Binds 2 Zn(2+) ions per subunit.</text>
</comment>
<comment type="subunit">
    <text>yscS is synthesized as one polypeptide chain precursor which after carbohydrate modification in the secretory pathway yields two active precursor molecules. The proteolytically unprocessed forms are associated with the membrane, whereas the mature forms of the enzyme are soluble.</text>
</comment>
<comment type="subcellular location">
    <subcellularLocation>
        <location evidence="4 7">Vacuole membrane</location>
        <topology evidence="4 7">Single-pass membrane protein</topology>
    </subcellularLocation>
    <text>Lysosome-like vacuoles.</text>
</comment>
<comment type="domain">
    <text>The transmembrane domain contains polar residues that mediate the recognition by TUL1.</text>
</comment>
<comment type="PTM">
    <text>Glycosylated.</text>
</comment>
<comment type="PTM">
    <text evidence="5">Ubiquitinated. Ubiquitination mediates sorting into internal vesicles in late endosomes. TUL1 is required for ubiquitination.</text>
</comment>
<comment type="miscellaneous">
    <text evidence="6">Present with 721 molecules/cell in log phase SD medium.</text>
</comment>
<comment type="similarity">
    <text evidence="8">Belongs to the peptidase M20A family.</text>
</comment>
<reference key="1">
    <citation type="journal article" date="1991" name="Eur. J. Biochem.">
        <title>Carboxypeptidase yscS: gene structure and function of the vacuolar enzyme.</title>
        <authorList>
            <person name="Spormann D.O."/>
            <person name="Heim J."/>
            <person name="Wolf D.H."/>
        </authorList>
    </citation>
    <scope>NUCLEOTIDE SEQUENCE [GENOMIC DNA]</scope>
    <source>
        <strain>ATCC 204508 / S288c</strain>
    </source>
</reference>
<reference key="2">
    <citation type="journal article" date="1991" name="FEBS Lett.">
        <title>Molecular cloning and sequencing of genomic DNA encoding yeast vacuolar carboxypeptidase yscS.</title>
        <authorList>
            <person name="Bordallo J."/>
            <person name="Bordallo C."/>
            <person name="Gascon S."/>
            <person name="Suarez-Rendueles P."/>
        </authorList>
    </citation>
    <scope>NUCLEOTIDE SEQUENCE [GENOMIC DNA]</scope>
    <source>
        <strain>ATCC 204510 / AB320</strain>
    </source>
</reference>
<reference key="3">
    <citation type="journal article" date="1996" name="EMBO J.">
        <title>Complete nucleotide sequence of Saccharomyces cerevisiae chromosome X.</title>
        <authorList>
            <person name="Galibert F."/>
            <person name="Alexandraki D."/>
            <person name="Baur A."/>
            <person name="Boles E."/>
            <person name="Chalwatzis N."/>
            <person name="Chuat J.-C."/>
            <person name="Coster F."/>
            <person name="Cziepluch C."/>
            <person name="de Haan M."/>
            <person name="Domdey H."/>
            <person name="Durand P."/>
            <person name="Entian K.-D."/>
            <person name="Gatius M."/>
            <person name="Goffeau A."/>
            <person name="Grivell L.A."/>
            <person name="Hennemann A."/>
            <person name="Herbert C.J."/>
            <person name="Heumann K."/>
            <person name="Hilger F."/>
            <person name="Hollenberg C.P."/>
            <person name="Huang M.-E."/>
            <person name="Jacq C."/>
            <person name="Jauniaux J.-C."/>
            <person name="Katsoulou C."/>
            <person name="Kirchrath L."/>
            <person name="Kleine K."/>
            <person name="Kordes E."/>
            <person name="Koetter P."/>
            <person name="Liebl S."/>
            <person name="Louis E.J."/>
            <person name="Manus V."/>
            <person name="Mewes H.-W."/>
            <person name="Miosga T."/>
            <person name="Obermaier B."/>
            <person name="Perea J."/>
            <person name="Pohl T.M."/>
            <person name="Portetelle D."/>
            <person name="Pujol A."/>
            <person name="Purnelle B."/>
            <person name="Ramezani Rad M."/>
            <person name="Rasmussen S.W."/>
            <person name="Rose M."/>
            <person name="Rossau R."/>
            <person name="Schaaff-Gerstenschlaeger I."/>
            <person name="Smits P.H.M."/>
            <person name="Scarcez T."/>
            <person name="Soriano N."/>
            <person name="To Van D."/>
            <person name="Tzermia M."/>
            <person name="Van Broekhoven A."/>
            <person name="Vandenbol M."/>
            <person name="Wedler H."/>
            <person name="von Wettstein D."/>
            <person name="Wambutt R."/>
            <person name="Zagulski M."/>
            <person name="Zollner A."/>
            <person name="Karpfinger-Hartl L."/>
        </authorList>
    </citation>
    <scope>NUCLEOTIDE SEQUENCE [LARGE SCALE GENOMIC DNA]</scope>
    <source>
        <strain>ATCC 204508 / S288c</strain>
    </source>
</reference>
<reference key="4">
    <citation type="journal article" date="2014" name="G3 (Bethesda)">
        <title>The reference genome sequence of Saccharomyces cerevisiae: Then and now.</title>
        <authorList>
            <person name="Engel S.R."/>
            <person name="Dietrich F.S."/>
            <person name="Fisk D.G."/>
            <person name="Binkley G."/>
            <person name="Balakrishnan R."/>
            <person name="Costanzo M.C."/>
            <person name="Dwight S.S."/>
            <person name="Hitz B.C."/>
            <person name="Karra K."/>
            <person name="Nash R.S."/>
            <person name="Weng S."/>
            <person name="Wong E.D."/>
            <person name="Lloyd P."/>
            <person name="Skrzypek M.S."/>
            <person name="Miyasato S.R."/>
            <person name="Simison M."/>
            <person name="Cherry J.M."/>
        </authorList>
    </citation>
    <scope>GENOME REANNOTATION</scope>
    <source>
        <strain>ATCC 204508 / S288c</strain>
    </source>
</reference>
<reference key="5">
    <citation type="journal article" date="1992" name="J. Biol. Chem.">
        <title>Biogenesis of the yeast vacuole (lysosome). The precursor forms of the soluble hydrolase carboxypeptidase yscS are associated with the vacuolar membrane.</title>
        <authorList>
            <person name="Spormann D.O."/>
            <person name="Heim J."/>
            <person name="Wolf D.H."/>
        </authorList>
    </citation>
    <scope>SUBCELLULAR LOCATION</scope>
</reference>
<reference key="6">
    <citation type="journal article" date="1994" name="Genomics">
        <title>Protein family classification based on searching a database of blocks.</title>
        <authorList>
            <person name="Henikoff S."/>
            <person name="Henikoff J.G."/>
        </authorList>
    </citation>
    <scope>SIMILARITY TO ARGE/DAPE/ACY1/CPG2/YSCS FAMILY</scope>
</reference>
<reference key="7">
    <citation type="journal article" date="2001" name="EMBO J.">
        <title>Sorting of proteins into multivesicular bodies: ubiquitin-dependent and -independent targeting.</title>
        <authorList>
            <person name="Reggiori F."/>
            <person name="Pelham H.R.B."/>
        </authorList>
    </citation>
    <scope>SUBCELLULAR LOCATION</scope>
</reference>
<reference key="8">
    <citation type="journal article" date="2002" name="Nat. Cell Biol.">
        <title>A transmembrane ubiquitin ligase required to sort membrane proteins into multivesicular bodies.</title>
        <authorList>
            <person name="Reggiori F."/>
            <person name="Pelham H.R.B."/>
        </authorList>
    </citation>
    <scope>UBIQUITINATION BY TUL1</scope>
</reference>
<reference key="9">
    <citation type="journal article" date="2003" name="Nature">
        <title>Global analysis of protein expression in yeast.</title>
        <authorList>
            <person name="Ghaemmaghami S."/>
            <person name="Huh W.-K."/>
            <person name="Bower K."/>
            <person name="Howson R.W."/>
            <person name="Belle A."/>
            <person name="Dephoure N."/>
            <person name="O'Shea E.K."/>
            <person name="Weissman J.S."/>
        </authorList>
    </citation>
    <scope>LEVEL OF PROTEIN EXPRESSION [LARGE SCALE ANALYSIS]</scope>
</reference>
<reference key="10">
    <citation type="journal article" date="2012" name="Proc. Natl. Acad. Sci. U.S.A.">
        <title>N-terminal acetylome analyses and functional insights of the N-terminal acetyltransferase NatB.</title>
        <authorList>
            <person name="Van Damme P."/>
            <person name="Lasa M."/>
            <person name="Polevoda B."/>
            <person name="Gazquez C."/>
            <person name="Elosegui-Artola A."/>
            <person name="Kim D.S."/>
            <person name="De Juan-Pardo E."/>
            <person name="Demeyer K."/>
            <person name="Hole K."/>
            <person name="Larrea E."/>
            <person name="Timmerman E."/>
            <person name="Prieto J."/>
            <person name="Arnesen T."/>
            <person name="Sherman F."/>
            <person name="Gevaert K."/>
            <person name="Aldabe R."/>
        </authorList>
    </citation>
    <scope>IDENTIFICATION BY MASS SPECTROMETRY [LARGE SCALE ANALYSIS]</scope>
</reference>
<reference key="11">
    <citation type="journal article" date="2012" name="Proteomics">
        <title>Sites of ubiquitin attachment in Saccharomyces cerevisiae.</title>
        <authorList>
            <person name="Starita L.M."/>
            <person name="Lo R.S."/>
            <person name="Eng J.K."/>
            <person name="von Haller P.D."/>
            <person name="Fields S."/>
        </authorList>
    </citation>
    <scope>UBIQUITINATION [LARGE SCALE ANALYSIS] AT LYS-8</scope>
    <scope>IDENTIFICATION BY MASS SPECTROMETRY [LARGE SCALE ANALYSIS]</scope>
</reference>
<organism>
    <name type="scientific">Saccharomyces cerevisiae (strain ATCC 204508 / S288c)</name>
    <name type="common">Baker's yeast</name>
    <dbReference type="NCBI Taxonomy" id="559292"/>
    <lineage>
        <taxon>Eukaryota</taxon>
        <taxon>Fungi</taxon>
        <taxon>Dikarya</taxon>
        <taxon>Ascomycota</taxon>
        <taxon>Saccharomycotina</taxon>
        <taxon>Saccharomycetes</taxon>
        <taxon>Saccharomycetales</taxon>
        <taxon>Saccharomycetaceae</taxon>
        <taxon>Saccharomyces</taxon>
    </lineage>
</organism>
<dbReference type="EC" id="3.4.17.4"/>
<dbReference type="EMBL" id="X57316">
    <property type="protein sequence ID" value="CAA40571.1"/>
    <property type="molecule type" value="Genomic_DNA"/>
</dbReference>
<dbReference type="EMBL" id="X63068">
    <property type="protein sequence ID" value="CAA44790.1"/>
    <property type="molecule type" value="Genomic_DNA"/>
</dbReference>
<dbReference type="EMBL" id="Z49447">
    <property type="protein sequence ID" value="CAA89467.1"/>
    <property type="molecule type" value="Genomic_DNA"/>
</dbReference>
<dbReference type="EMBL" id="BK006943">
    <property type="protein sequence ID" value="DAA08632.1"/>
    <property type="molecule type" value="Genomic_DNA"/>
</dbReference>
<dbReference type="PIR" id="S16693">
    <property type="entry name" value="S16693"/>
</dbReference>
<dbReference type="RefSeq" id="NP_012363.1">
    <property type="nucleotide sequence ID" value="NM_001181605.1"/>
</dbReference>
<dbReference type="SMR" id="P27614"/>
<dbReference type="BioGRID" id="33588">
    <property type="interactions" value="90"/>
</dbReference>
<dbReference type="DIP" id="DIP-5566N"/>
<dbReference type="FunCoup" id="P27614">
    <property type="interactions" value="76"/>
</dbReference>
<dbReference type="IntAct" id="P27614">
    <property type="interactions" value="13"/>
</dbReference>
<dbReference type="MINT" id="P27614"/>
<dbReference type="STRING" id="4932.YJL172W"/>
<dbReference type="MEROPS" id="M20.002"/>
<dbReference type="GlyCosmos" id="P27614">
    <property type="glycosylation" value="5 sites, No reported glycans"/>
</dbReference>
<dbReference type="GlyGen" id="P27614">
    <property type="glycosylation" value="5 sites"/>
</dbReference>
<dbReference type="iPTMnet" id="P27614"/>
<dbReference type="PaxDb" id="4932-YJL172W"/>
<dbReference type="PeptideAtlas" id="P27614"/>
<dbReference type="DNASU" id="853267"/>
<dbReference type="EnsemblFungi" id="YJL172W_mRNA">
    <property type="protein sequence ID" value="YJL172W"/>
    <property type="gene ID" value="YJL172W"/>
</dbReference>
<dbReference type="GeneID" id="853267"/>
<dbReference type="KEGG" id="sce:YJL172W"/>
<dbReference type="AGR" id="SGD:S000003708"/>
<dbReference type="SGD" id="S000003708">
    <property type="gene designation" value="CPS1"/>
</dbReference>
<dbReference type="VEuPathDB" id="FungiDB:YJL172W"/>
<dbReference type="eggNOG" id="KOG2275">
    <property type="taxonomic scope" value="Eukaryota"/>
</dbReference>
<dbReference type="HOGENOM" id="CLU_021802_11_0_1"/>
<dbReference type="InParanoid" id="P27614"/>
<dbReference type="OMA" id="ETDFVWG"/>
<dbReference type="OrthoDB" id="3064516at2759"/>
<dbReference type="BioCyc" id="MetaCyc:YJL172W-MONOMER"/>
<dbReference type="BioCyc" id="YEAST:YJL172W-MONOMER"/>
<dbReference type="Reactome" id="R-SCE-9673163">
    <property type="pathway name" value="Oleoyl-phe metabolism"/>
</dbReference>
<dbReference type="BioGRID-ORCS" id="853267">
    <property type="hits" value="3 hits in 10 CRISPR screens"/>
</dbReference>
<dbReference type="PRO" id="PR:P27614"/>
<dbReference type="Proteomes" id="UP000002311">
    <property type="component" value="Chromosome X"/>
</dbReference>
<dbReference type="RNAct" id="P27614">
    <property type="molecule type" value="protein"/>
</dbReference>
<dbReference type="GO" id="GO:0000324">
    <property type="term" value="C:fungal-type vacuole"/>
    <property type="evidence" value="ECO:0007005"/>
    <property type="project" value="SGD"/>
</dbReference>
<dbReference type="GO" id="GO:0000328">
    <property type="term" value="C:fungal-type vacuole lumen"/>
    <property type="evidence" value="ECO:0000314"/>
    <property type="project" value="SGD"/>
</dbReference>
<dbReference type="GO" id="GO:0005775">
    <property type="term" value="C:vacuolar lumen"/>
    <property type="evidence" value="ECO:0000314"/>
    <property type="project" value="CAFA"/>
</dbReference>
<dbReference type="GO" id="GO:0005774">
    <property type="term" value="C:vacuolar membrane"/>
    <property type="evidence" value="ECO:0007669"/>
    <property type="project" value="UniProtKB-SubCell"/>
</dbReference>
<dbReference type="GO" id="GO:0004180">
    <property type="term" value="F:carboxypeptidase activity"/>
    <property type="evidence" value="ECO:0000315"/>
    <property type="project" value="SGD"/>
</dbReference>
<dbReference type="GO" id="GO:0046872">
    <property type="term" value="F:metal ion binding"/>
    <property type="evidence" value="ECO:0007669"/>
    <property type="project" value="UniProtKB-KW"/>
</dbReference>
<dbReference type="GO" id="GO:0004181">
    <property type="term" value="F:metallocarboxypeptidase activity"/>
    <property type="evidence" value="ECO:0007669"/>
    <property type="project" value="UniProtKB-EC"/>
</dbReference>
<dbReference type="GO" id="GO:0051603">
    <property type="term" value="P:proteolysis involved in protein catabolic process"/>
    <property type="evidence" value="ECO:0000315"/>
    <property type="project" value="SGD"/>
</dbReference>
<dbReference type="CDD" id="cd05674">
    <property type="entry name" value="M20_yscS"/>
    <property type="match status" value="1"/>
</dbReference>
<dbReference type="FunFam" id="3.40.630.10:FF:000098">
    <property type="entry name" value="Gly-Xaa carboxypeptidase"/>
    <property type="match status" value="1"/>
</dbReference>
<dbReference type="Gene3D" id="1.10.150.900">
    <property type="match status" value="1"/>
</dbReference>
<dbReference type="Gene3D" id="3.30.70.360">
    <property type="match status" value="1"/>
</dbReference>
<dbReference type="Gene3D" id="3.40.630.10">
    <property type="entry name" value="Zn peptidases"/>
    <property type="match status" value="1"/>
</dbReference>
<dbReference type="InterPro" id="IPR001261">
    <property type="entry name" value="ArgE/DapE_CS"/>
</dbReference>
<dbReference type="InterPro" id="IPR036264">
    <property type="entry name" value="Bact_exopeptidase_dim_dom"/>
</dbReference>
<dbReference type="InterPro" id="IPR017141">
    <property type="entry name" value="Pept_M20_carboxypep"/>
</dbReference>
<dbReference type="InterPro" id="IPR047177">
    <property type="entry name" value="Pept_M20A"/>
</dbReference>
<dbReference type="InterPro" id="IPR002933">
    <property type="entry name" value="Peptidase_M20"/>
</dbReference>
<dbReference type="InterPro" id="IPR011650">
    <property type="entry name" value="Peptidase_M20_dimer"/>
</dbReference>
<dbReference type="PANTHER" id="PTHR45962">
    <property type="entry name" value="N-FATTY-ACYL-AMINO ACID SYNTHASE/HYDROLASE PM20D1"/>
    <property type="match status" value="1"/>
</dbReference>
<dbReference type="PANTHER" id="PTHR45962:SF1">
    <property type="entry name" value="N-FATTY-ACYL-AMINO ACID SYNTHASE_HYDROLASE PM20D1"/>
    <property type="match status" value="1"/>
</dbReference>
<dbReference type="Pfam" id="PF07687">
    <property type="entry name" value="M20_dimer"/>
    <property type="match status" value="1"/>
</dbReference>
<dbReference type="Pfam" id="PF01546">
    <property type="entry name" value="Peptidase_M20"/>
    <property type="match status" value="1"/>
</dbReference>
<dbReference type="PIRSF" id="PIRSF037217">
    <property type="entry name" value="Carboxypeptidase_S"/>
    <property type="match status" value="1"/>
</dbReference>
<dbReference type="SUPFAM" id="SSF55031">
    <property type="entry name" value="Bacterial exopeptidase dimerisation domain"/>
    <property type="match status" value="1"/>
</dbReference>
<dbReference type="SUPFAM" id="SSF53187">
    <property type="entry name" value="Zn-dependent exopeptidases"/>
    <property type="match status" value="1"/>
</dbReference>
<dbReference type="PROSITE" id="PS00758">
    <property type="entry name" value="ARGE_DAPE_CPG2_1"/>
    <property type="match status" value="1"/>
</dbReference>
<dbReference type="PROSITE" id="PS00759">
    <property type="entry name" value="ARGE_DAPE_CPG2_2"/>
    <property type="match status" value="1"/>
</dbReference>
<accession>P27614</accession>
<accession>D6VW16</accession>
<keyword id="KW-0121">Carboxypeptidase</keyword>
<keyword id="KW-0325">Glycoprotein</keyword>
<keyword id="KW-0378">Hydrolase</keyword>
<keyword id="KW-1017">Isopeptide bond</keyword>
<keyword id="KW-0472">Membrane</keyword>
<keyword id="KW-0479">Metal-binding</keyword>
<keyword id="KW-0645">Protease</keyword>
<keyword id="KW-1185">Reference proteome</keyword>
<keyword id="KW-0812">Transmembrane</keyword>
<keyword id="KW-1133">Transmembrane helix</keyword>
<keyword id="KW-0832">Ubl conjugation</keyword>
<keyword id="KW-0926">Vacuole</keyword>
<keyword id="KW-0862">Zinc</keyword>
<gene>
    <name type="primary">CPS1</name>
    <name type="synonym">CPS</name>
    <name type="ordered locus">YJL172W</name>
    <name type="ORF">J0510</name>
</gene>
<name>CBPS_YEAST</name>
<evidence type="ECO:0000250" key="1"/>
<evidence type="ECO:0000255" key="2"/>
<evidence type="ECO:0000256" key="3">
    <source>
        <dbReference type="SAM" id="MobiDB-lite"/>
    </source>
</evidence>
<evidence type="ECO:0000269" key="4">
    <source>
    </source>
</evidence>
<evidence type="ECO:0000269" key="5">
    <source>
    </source>
</evidence>
<evidence type="ECO:0000269" key="6">
    <source>
    </source>
</evidence>
<evidence type="ECO:0000269" key="7">
    <source>
    </source>
</evidence>
<evidence type="ECO:0000305" key="8"/>
<evidence type="ECO:0007744" key="9">
    <source>
    </source>
</evidence>